<reference key="1">
    <citation type="journal article" date="1992" name="J. Biol. Chem.">
        <title>Purification, cloning, and molecular characterization of a high molecular weight hemorrhagic metalloprotease, jararhagin, from Bothrops jararaca venom. Insights into the disintegrin gene family.</title>
        <authorList>
            <person name="Paine M.J.I."/>
            <person name="Desmond H.P."/>
            <person name="Theakston R.D.G."/>
            <person name="Crampton J.M."/>
        </authorList>
    </citation>
    <scope>NUCLEOTIDE SEQUENCE [GENOMIC DNA]</scope>
    <source>
        <tissue>Venom gland</tissue>
    </source>
</reference>
<reference key="2">
    <citation type="journal article" date="2003" name="Arch. Biochem. Biophys.">
        <title>Evidence for heterogeneous forms of the snake venom metalloproteinase jararhagin: a factor contributing to snake venom variability.</title>
        <authorList>
            <person name="Moura-da-Silva A.M."/>
            <person name="Della-Casa M.S."/>
            <person name="David A.S."/>
            <person name="Assakura M.T."/>
            <person name="Butera D."/>
            <person name="Lebrun I."/>
            <person name="Shannon J.D."/>
            <person name="Serrano S.M.T."/>
            <person name="Fox J.W."/>
        </authorList>
    </citation>
    <scope>PROTEIN SEQUENCE OF 175-183; 236-242; 361-369; 423-448; 507-516; 520-534 AND 535-552</scope>
    <scope>MISCELLANEOUS</scope>
</reference>
<reference key="3">
    <citation type="journal article" date="2002" name="Toxicon">
        <title>N-terminal amino acid sequences and some characteristics of fibrinolytic/hemorrhagic metalloproteinases purified from Bothrops jararaca venom.</title>
        <authorList>
            <person name="Maruyama M."/>
            <person name="Sugiki M."/>
            <person name="Anai K."/>
            <person name="Yoshida E."/>
        </authorList>
    </citation>
    <scope>PROTEIN SEQUENCE OF 213-227; 373-393; 421-439 AND 503-521</scope>
    <scope>CATALYTIC ACTIVITY</scope>
    <source>
        <tissue>Venom</tissue>
    </source>
</reference>
<reference key="4">
    <citation type="journal article" date="1994" name="Biochem. Biophys. Res. Commun.">
        <title>A 28 kDa-protein with disintegrin-like structure (jararhagin-C) purified from Bothrops jararaca venom inhibits collagen- and ADP-induced platelet aggregation.</title>
        <authorList>
            <person name="Usami Y."/>
            <person name="Fujimura Y."/>
            <person name="Miura S."/>
            <person name="Shima H."/>
            <person name="Yoshida E."/>
            <person name="Yoshioka A."/>
            <person name="Hirano K."/>
            <person name="Suzuki M."/>
            <person name="Titani K."/>
        </authorList>
    </citation>
    <scope>PROTEIN SEQUENCE OF 360-571 (JARARHAGIN-C)</scope>
    <scope>FUNCTION OF JARARHAGIN-C</scope>
    <source>
        <tissue>Venom</tissue>
    </source>
</reference>
<reference key="5">
    <citation type="journal article" date="1994" name="Thromb. Haemost.">
        <title>Properties of fibrinogen cleaved by Jararhagin, a metalloproteinase from the venom of Bothrops jararaca.</title>
        <authorList>
            <person name="Kamiguti A.S."/>
            <person name="Slupsky J.R."/>
            <person name="Zuzel M."/>
            <person name="Hay C.R.M."/>
        </authorList>
    </citation>
    <scope>FUNCTION</scope>
</reference>
<reference key="6">
    <citation type="journal article" date="1995" name="Biochem. Biophys. Res. Commun.">
        <title>Jararhagin and jaracetin: novel snake venom inhibitors of the integrin collagen receptor, alpha 2 beta 1.</title>
        <authorList>
            <person name="De Luca M."/>
            <person name="Ward C.M."/>
            <person name="Ohmori K."/>
            <person name="Andrews R.K."/>
            <person name="Berndt M.C."/>
        </authorList>
    </citation>
    <scope>PROTEIN SEQUENCE OF 360-375</scope>
    <scope>FUNCTION</scope>
    <scope>SUBUNIT (JARACETIN)</scope>
    <source>
        <tissue>Venom</tissue>
    </source>
</reference>
<reference key="7">
    <citation type="journal article" date="1996" name="Biochem. J.">
        <title>Inhibition of collagen-induced platelet aggregation as the result of cleavage of alpha 2 beta 1-integrin by the snake venom metalloproteinase jararhagin.</title>
        <authorList>
            <person name="Kamiguti A.S."/>
            <person name="Hay C.R.M."/>
            <person name="Zuzel M."/>
        </authorList>
    </citation>
    <scope>FUNCTION</scope>
</reference>
<reference key="8">
    <citation type="journal article" date="1997" name="Biochim. Biophys. Acta">
        <title>Collagen-induced secretion-dependent phase of platelet aggregation is inhibited by the snake venom metalloproteinase jararhagin.</title>
        <authorList>
            <person name="Kamiguti A.S."/>
            <person name="Moura-da-Silva A.M."/>
            <person name="Laing G.D."/>
            <person name="Knapp T."/>
            <person name="Zuzel M."/>
            <person name="Crampton J.M."/>
            <person name="Theakston R.D.G."/>
        </authorList>
    </citation>
    <scope>FUNCTION</scope>
</reference>
<reference key="9">
    <citation type="journal article" date="2001" name="Thromb. Res.">
        <title>Selective recognition of alpha2beta1 integrin by jararhagin, a metalloproteinase/disintegrin from Bothrops jararaca venom.</title>
        <authorList>
            <person name="Moura-da-Silva A.M."/>
            <person name="Marcinkiewicz C."/>
            <person name="Marcinkiewicz M."/>
            <person name="Niewiarowski S."/>
        </authorList>
    </citation>
    <scope>FUNCTION</scope>
</reference>
<reference key="10">
    <citation type="journal article" date="2002" name="J. Biol. Chem.">
        <title>The reprolysin jararhagin, a snake venom metalloproteinase, functions as a fibrillar collagen agonist involved in fibroblast cell adhesion and signaling.</title>
        <authorList>
            <person name="Zigrino P."/>
            <person name="Kamiguti A.S."/>
            <person name="Eble J."/>
            <person name="Drescher C."/>
            <person name="Nischt R."/>
            <person name="Fox J.W."/>
            <person name="Mauch C."/>
        </authorList>
    </citation>
    <scope>FUNCTION</scope>
</reference>
<reference key="11">
    <citation type="journal article" date="2003" name="Toxicol. Appl. Pharmacol.">
        <title>Pulmonary hemorrhage induced by jararhagin, a metalloproteinase from Bothrops jararaca snake venom.</title>
        <authorList>
            <person name="Escalante T."/>
            <person name="Nunez J."/>
            <person name="Moura-da-Silva A.M."/>
            <person name="Rucavado A."/>
            <person name="Theakston R.D.G."/>
            <person name="Gutierrez J.M."/>
        </authorList>
    </citation>
    <scope>FUNCTION</scope>
    <scope>ACTIVITY REGULATION</scope>
</reference>
<reference key="12">
    <citation type="journal article" date="2003" name="Toxicon">
        <title>Haematopoietic effects induced in mice by the snake venom toxin jararhagin.</title>
        <authorList>
            <person name="Maria D.A."/>
            <person name="Vassao R.C."/>
            <person name="Ruiz I.R.G."/>
        </authorList>
    </citation>
    <scope>FUNCTION</scope>
</reference>
<reference key="13">
    <citation type="journal article" date="2004" name="Toxicon">
        <title>Jararhagin, a snake venom metalloproteinase-disintegrin, stimulates epithelial cell migration in an in vitro restitution model.</title>
        <authorList>
            <person name="Costa E.P."/>
            <person name="Santos M.F."/>
        </authorList>
    </citation>
    <scope>FUNCTION</scope>
    <scope>ACTIVITY REGULATION</scope>
</reference>
<reference key="14">
    <citation type="journal article" date="2005" name="Apoptosis">
        <title>Jararhagin, a snake venom metalloproteinase, induces a specialized form of apoptosis (anoikis) selective to endothelial cells.</title>
        <authorList>
            <person name="Tanjoni I."/>
            <person name="Weinlich R."/>
            <person name="Della-Casa M.S."/>
            <person name="Clissa P.B."/>
            <person name="Saldanha-Gama R.F."/>
            <person name="de Freitas M.S."/>
            <person name="Barja-Fidalgo C."/>
            <person name="Amarante-Mendes G.P."/>
            <person name="Moura-da-Silva A.M."/>
        </authorList>
    </citation>
    <scope>FUNCTION</scope>
</reference>
<reference key="15">
    <citation type="journal article" date="2005" name="Arch. Biochem. Biophys.">
        <title>Role of the snake venom toxin jararhagin in proinflammatory pathogenesis: in vitro and in vivo gene expression analysis of the effects of the toxin.</title>
        <authorList>
            <person name="Gallagher P."/>
            <person name="Bao Y."/>
            <person name="Serrano S.M.T."/>
            <person name="Laing G.D."/>
            <person name="Theakston R.D.G."/>
            <person name="Gutierrez J.M."/>
            <person name="Escalante T."/>
            <person name="Zigrino P."/>
            <person name="Moura-da-Silva A.M."/>
            <person name="Nischt R."/>
            <person name="Mauch C."/>
            <person name="Moskaluk C."/>
            <person name="Fox J.W."/>
        </authorList>
    </citation>
    <scope>FUNCTION</scope>
</reference>
<reference key="16">
    <citation type="journal article" date="2006" name="Toxicon">
        <title>Importance of jararhagin disintegrin-like and cysteine-rich domains in the early events of local inflammatory response.</title>
        <authorList>
            <person name="Clissa P.B."/>
            <person name="Lopes-Ferreira M."/>
            <person name="Della-Casa M.S."/>
            <person name="Farsky S.H.P."/>
            <person name="Moura-da-Silva A.M."/>
        </authorList>
    </citation>
    <scope>FUNCTION OF JARARHAGIN-C</scope>
</reference>
<reference key="17">
    <citation type="journal article" date="2006" name="Toxicon">
        <title>Toxin jararhagin in low doses induces interstitial edema and increases the metabolic rate and red blood cells in mice.</title>
        <authorList>
            <person name="Francisco G."/>
            <person name="Zara F.J."/>
            <person name="Maria D.A."/>
            <person name="Cruz-Neto A.P."/>
        </authorList>
    </citation>
    <scope>FUNCTION</scope>
</reference>
<reference key="18">
    <citation type="journal article" date="2008" name="Biochimie">
        <title>Collagen binding is a key factor for the hemorrhagic activity of snake venom metalloproteinases.</title>
        <authorList>
            <person name="Moura-da-Silva A.M."/>
            <person name="Ramos O.H.P."/>
            <person name="Baldo C."/>
            <person name="Niland S."/>
            <person name="Hansen U."/>
            <person name="Ventura J.S."/>
            <person name="Furlan S."/>
            <person name="Butera D."/>
            <person name="Della-Casa M.S."/>
            <person name="Tanjoni I."/>
            <person name="Clissa P.B."/>
            <person name="Fernandes I."/>
            <person name="Chudzinski-Tavassi A.M."/>
            <person name="Eble J.A."/>
        </authorList>
    </citation>
    <scope>FUNCTION</scope>
</reference>
<reference key="19">
    <citation type="journal article" date="2005" name="Toxicon">
        <title>Jararhagin and its multiple effects on hemostasis.</title>
        <authorList>
            <person name="Laing G.D."/>
            <person name="Moura-da-Silva A.M."/>
        </authorList>
    </citation>
    <scope>REVIEW</scope>
</reference>
<reference key="20">
    <citation type="journal article" date="2001" name="Acta Crystallogr. D">
        <title>Crystallization and preliminary X-ray analysis of jararhagin, a metalloproteinase/disintegrin from Bothrops jararaca snake venom.</title>
        <authorList>
            <person name="Souza D.H.F."/>
            <person name="Selistre de Araujo H.S."/>
            <person name="Moura-da-Silva A.M."/>
            <person name="Della-Casa M.S."/>
            <person name="Oliva G."/>
            <person name="Garratt R.C."/>
        </authorList>
    </citation>
    <scope>CRYSTALLIZATION</scope>
    <scope>3D-STRUCTURE MODELING</scope>
</reference>
<feature type="propeptide" id="PRO_0000029009" evidence="1">
    <location>
        <begin position="1" status="less than"/>
        <end position="150"/>
    </location>
</feature>
<feature type="chain" id="PRO_0000029010" description="Zinc metalloproteinase-disintegrin-like jararhagin">
    <location>
        <begin position="151"/>
        <end position="571"/>
    </location>
</feature>
<feature type="chain" id="PRO_0000029011" description="Disintegrin-like jararhagin-C">
    <location>
        <begin position="360"/>
        <end position="571"/>
    </location>
</feature>
<feature type="domain" description="Peptidase M12B" evidence="5">
    <location>
        <begin position="159"/>
        <end position="355"/>
    </location>
</feature>
<feature type="domain" description="Disintegrin" evidence="4">
    <location>
        <begin position="363"/>
        <end position="449"/>
    </location>
</feature>
<feature type="short sequence motif" description="D/ECD-tripeptide">
    <location>
        <begin position="427"/>
        <end position="429"/>
    </location>
</feature>
<feature type="active site" evidence="5 6">
    <location>
        <position position="296"/>
    </location>
</feature>
<feature type="binding site" evidence="1">
    <location>
        <position position="162"/>
    </location>
    <ligand>
        <name>Ca(2+)</name>
        <dbReference type="ChEBI" id="CHEBI:29108"/>
        <label>1</label>
    </ligand>
</feature>
<feature type="binding site" evidence="1">
    <location>
        <position position="246"/>
    </location>
    <ligand>
        <name>Ca(2+)</name>
        <dbReference type="ChEBI" id="CHEBI:29108"/>
        <label>1</label>
    </ligand>
</feature>
<feature type="binding site" evidence="11">
    <location>
        <position position="295"/>
    </location>
    <ligand>
        <name>Zn(2+)</name>
        <dbReference type="ChEBI" id="CHEBI:29105"/>
        <note>catalytic</note>
    </ligand>
</feature>
<feature type="binding site" evidence="11">
    <location>
        <position position="299"/>
    </location>
    <ligand>
        <name>Zn(2+)</name>
        <dbReference type="ChEBI" id="CHEBI:29105"/>
        <note>catalytic</note>
    </ligand>
</feature>
<feature type="binding site" evidence="11">
    <location>
        <position position="305"/>
    </location>
    <ligand>
        <name>Zn(2+)</name>
        <dbReference type="ChEBI" id="CHEBI:29105"/>
        <note>catalytic</note>
    </ligand>
</feature>
<feature type="binding site" evidence="1">
    <location>
        <position position="350"/>
    </location>
    <ligand>
        <name>Ca(2+)</name>
        <dbReference type="ChEBI" id="CHEBI:29108"/>
        <label>1</label>
    </ligand>
</feature>
<feature type="binding site" evidence="1">
    <location>
        <position position="353"/>
    </location>
    <ligand>
        <name>Ca(2+)</name>
        <dbReference type="ChEBI" id="CHEBI:29108"/>
        <label>1</label>
    </ligand>
</feature>
<feature type="binding site" evidence="1">
    <location>
        <position position="365"/>
    </location>
    <ligand>
        <name>Ca(2+)</name>
        <dbReference type="ChEBI" id="CHEBI:29108"/>
        <label>2</label>
    </ligand>
</feature>
<feature type="binding site" evidence="1">
    <location>
        <position position="368"/>
    </location>
    <ligand>
        <name>Ca(2+)</name>
        <dbReference type="ChEBI" id="CHEBI:29108"/>
        <label>2</label>
    </ligand>
</feature>
<feature type="binding site" evidence="1">
    <location>
        <position position="370"/>
    </location>
    <ligand>
        <name>Ca(2+)</name>
        <dbReference type="ChEBI" id="CHEBI:29108"/>
        <label>2</label>
    </ligand>
</feature>
<feature type="binding site" evidence="1">
    <location>
        <position position="372"/>
    </location>
    <ligand>
        <name>Ca(2+)</name>
        <dbReference type="ChEBI" id="CHEBI:29108"/>
        <label>2</label>
    </ligand>
</feature>
<feature type="binding site" evidence="1">
    <location>
        <position position="375"/>
    </location>
    <ligand>
        <name>Ca(2+)</name>
        <dbReference type="ChEBI" id="CHEBI:29108"/>
        <label>2</label>
    </ligand>
</feature>
<feature type="binding site" evidence="1">
    <location>
        <position position="378"/>
    </location>
    <ligand>
        <name>Ca(2+)</name>
        <dbReference type="ChEBI" id="CHEBI:29108"/>
        <label>2</label>
    </ligand>
</feature>
<feature type="binding site" evidence="1">
    <location>
        <position position="429"/>
    </location>
    <ligand>
        <name>Ca(2+)</name>
        <dbReference type="ChEBI" id="CHEBI:29108"/>
        <label>3</label>
    </ligand>
</feature>
<feature type="binding site" evidence="1">
    <location>
        <position position="430"/>
    </location>
    <ligand>
        <name>Ca(2+)</name>
        <dbReference type="ChEBI" id="CHEBI:29108"/>
        <label>3</label>
    </ligand>
</feature>
<feature type="binding site" evidence="1">
    <location>
        <position position="432"/>
    </location>
    <ligand>
        <name>Ca(2+)</name>
        <dbReference type="ChEBI" id="CHEBI:29108"/>
        <label>3</label>
    </ligand>
</feature>
<feature type="binding site" evidence="1">
    <location>
        <position position="444"/>
    </location>
    <ligand>
        <name>Ca(2+)</name>
        <dbReference type="ChEBI" id="CHEBI:29108"/>
        <label>3</label>
    </ligand>
</feature>
<feature type="binding site" evidence="1">
    <location>
        <position position="445"/>
    </location>
    <ligand>
        <name>Ca(2+)</name>
        <dbReference type="ChEBI" id="CHEBI:29108"/>
        <label>3</label>
    </ligand>
</feature>
<feature type="site" description="Necessary, but not sufficient, for proteolytic processing">
    <location>
        <position position="339"/>
    </location>
</feature>
<feature type="modified residue" description="Pyrrolidone carboxylic acid (Glu)" evidence="2">
    <location>
        <position position="151"/>
    </location>
</feature>
<feature type="glycosylation site" description="N-linked (GlcNAc...) asparagine" evidence="3">
    <location>
        <position position="333"/>
    </location>
</feature>
<feature type="disulfide bond" description="In zinc metalloproteinase-disintegrin-like jararhagin" evidence="1">
    <location>
        <begin position="270"/>
        <end position="350"/>
    </location>
</feature>
<feature type="disulfide bond" description="In zinc metalloproteinase-disintegrin-like jararhagin" evidence="1">
    <location>
        <begin position="310"/>
        <end position="334"/>
    </location>
</feature>
<feature type="disulfide bond" description="In zinc metalloproteinase-disintegrin-like jararhagin" evidence="1">
    <location>
        <begin position="312"/>
        <end position="317"/>
    </location>
</feature>
<feature type="disulfide bond" description="In zinc metalloproteinase-disintegrin-like jararhagin; alternate" evidence="1">
    <location>
        <begin position="366"/>
        <end position="395"/>
    </location>
</feature>
<feature type="disulfide bond" description="In disintegrin-like jararhagin-C; alternate" evidence="1">
    <location>
        <begin position="366"/>
        <end position="385"/>
    </location>
</feature>
<feature type="disulfide bond" description="In disintegrin-like jararhagin-C; alternate" evidence="1">
    <location>
        <begin position="377"/>
        <end position="395"/>
    </location>
</feature>
<feature type="disulfide bond" description="In zinc metalloproteinase-disintegrin-like jararhagin; alternate" evidence="1">
    <location>
        <begin position="377"/>
        <end position="390"/>
    </location>
</feature>
<feature type="disulfide bond" description="In zinc metalloproteinase-disintegrin-like jararhagin; alternate" evidence="1">
    <location>
        <begin position="379"/>
        <end position="385"/>
    </location>
</feature>
<feature type="disulfide bond" description="In zinc metalloproteinase-disintegrin-like jararhagin" evidence="1">
    <location>
        <begin position="389"/>
        <end position="412"/>
    </location>
</feature>
<feature type="disulfide bond" description="In zinc metalloproteinase-disintegrin-like jararhagin" evidence="1">
    <location>
        <begin position="403"/>
        <end position="409"/>
    </location>
</feature>
<feature type="disulfide bond" description="In zinc metalloproteinase-disintegrin-like jararhagin" evidence="1">
    <location>
        <begin position="408"/>
        <end position="434"/>
    </location>
</feature>
<feature type="disulfide bond" description="In both disintegrin-like jararhagin-C and zinc metalloproteinase-disintegrin-like jararhagin" evidence="4 5">
    <location>
        <begin position="421"/>
        <end position="441"/>
    </location>
</feature>
<feature type="disulfide bond" description="In zinc metalloproteinase-disintegrin-like jararhagin; alternate" evidence="1">
    <location>
        <begin position="428"/>
        <end position="460"/>
    </location>
</feature>
<feature type="disulfide bond" description="In disintegrin-like jararhagin-C; alternate" evidence="1">
    <location>
        <begin position="428"/>
        <end position="453"/>
    </location>
</feature>
<feature type="disulfide bond" description="In zinc metalloproteinase-disintegrin-like jararhagin; alternate" evidence="1">
    <location>
        <begin position="453"/>
        <end position="465"/>
    </location>
</feature>
<feature type="disulfide bond" description="In disintegrin-like jararhagin-C" evidence="1">
    <location>
        <begin position="460"/>
        <end position="465"/>
    </location>
</feature>
<feature type="disulfide bond" description="In zinc metalloproteinase-disintegrin-like jararhagin; alternate" evidence="1">
    <location>
        <begin position="472"/>
        <end position="522"/>
    </location>
</feature>
<feature type="disulfide bond" description="In disintegrin-like jararhagin-C; alternate" evidence="1">
    <location>
        <begin position="472"/>
        <end position="487"/>
    </location>
</feature>
<feature type="disulfide bond" description="In zinc metalloproteinase-disintegrin-like jararhagin; alternate" evidence="1">
    <location>
        <begin position="487"/>
        <end position="533"/>
    </location>
</feature>
<feature type="disulfide bond" description="In zinc metalloproteinase-disintegrin-like jararhagin; alternate" evidence="1">
    <location>
        <begin position="500"/>
        <end position="510"/>
    </location>
</feature>
<feature type="disulfide bond" description="In disintegrin-like jararhagin-C; alternate" evidence="1">
    <location>
        <begin position="510"/>
        <end position="517"/>
    </location>
</feature>
<feature type="disulfide bond" description="In zinc metalloproteinase-disintegrin-like jararhagin; alternate" evidence="1">
    <location>
        <begin position="517"/>
        <end position="559"/>
    </location>
</feature>
<feature type="disulfide bond" description="In disintegrin-like jararhagin-C" evidence="1">
    <location>
        <begin position="522"/>
        <end position="533"/>
    </location>
</feature>
<feature type="disulfide bond" description="In zinc metalloproteinase-disintegrin-like jararhagin; alternate" evidence="1">
    <location>
        <begin position="553"/>
        <end position="564"/>
    </location>
</feature>
<feature type="disulfide bond" description="In disintegrin-like jararhagin-C" evidence="1">
    <location>
        <begin position="559"/>
        <end position="564"/>
    </location>
</feature>
<feature type="non-terminal residue">
    <location>
        <position position="1"/>
    </location>
</feature>
<name>VM3JA_BOTJA</name>
<comment type="function">
    <text>Snake venom zinc metalloproteinase-disintegrin-like jararhagin: causes hemorrhage. This is the result of the degradation of sub-endothelial matrix proteins leading to the disruption of the blood vessel endothelium, with accompanying disturbances in platelet function. It is able to degrade von Willebrand factor (vWF) and it hydrolyzes the alpha-chain of fibrinogen (FGA) while leaving the beta and gamma chains unaffected. It inhibits collagen-induced platelet aggregation through the binding to alpha-2/beta-1 integrin (ITGA2/ITGB1) (collagen receptor), and it cleaves the beta-1 subunit of the same integrin, inhibiting platelet interaction and ultimately causing impairment of signal transduction. It has inability to be affected by the plasma inhibitor alpha(2)-macroglobulin. In fibroblasts, it functions as a collagen-mimetic substrate and, in endothelial cells, it causes apoptosis and indirectly inhibits cell proliferation by release of angiostatin-like compounds. It induces a strong pro-inflammatory response characterized by intense leukocyte accumulation and release of cytokines at the site of the injection. Although hemorrhage and edema are a response to the direct effect of this toxin, jararhagin-induced inflammation and necrosis are dependent on macrophages and key pro-inflammatory cytokines or their receptors. It also possesses anti-tumorgenic properties.</text>
</comment>
<comment type="function">
    <molecule>Disintegrin-like jararhagin-C</molecule>
    <text>The monomeric form inhibits collagen- and ADP-induced platelet aggregation, but has no effect on glycoprotein Ib-IX-dependent (GP1BA/GP5/GP9) platelet agglutination. Locally activates the early events of an acute inflammatory response as leukocyte rolling and pro-inflammatory cytokine release.</text>
</comment>
<comment type="function">
    <molecule>Disintegrin-like jararhagin-C</molecule>
    <text>The dimeric form jaracetin may be a dimeric form of jararhagin-C. It binds to von Willebrand factor (VWF) and induces its interaction with GPIbalpha (GP1BA) (via the vWF A1 domain), resulting in platelet aggregation. Also binds the alpha-2 subunit of the alpha-2/beta-1 (ITGA2/ITGB1) integrin. It potently induces platelet aggregation in citrated platelet-rich plasma.</text>
</comment>
<comment type="catalytic activity">
    <reaction evidence="7">
        <text>Cleavage of 10-His-|-Leu-11, 14-Ala-|-Leu-15, 16-Tyr-|-Leu-17 and 24-Phe-|-Phe-25 bonds in insulin B chain.</text>
        <dbReference type="EC" id="3.4.24.73"/>
    </reaction>
</comment>
<comment type="cofactor">
    <cofactor evidence="1">
        <name>Zn(2+)</name>
        <dbReference type="ChEBI" id="CHEBI:29105"/>
    </cofactor>
    <text evidence="1">Binds 1 zinc ion per subunit.</text>
</comment>
<comment type="activity regulation">
    <text evidence="8 9">Inhibited by EDTA, 1,10 phenanthroline and batimastat (a peptidomimetic MMP inhibitor).</text>
</comment>
<comment type="subunit">
    <text evidence="10">Monomer (Jararhagin and Jararhagin-C) and dimer (Jaracetin).</text>
</comment>
<comment type="subcellular location">
    <subcellularLocation>
        <location>Secreted</location>
    </subcellularLocation>
</comment>
<comment type="tissue specificity">
    <text>Expressed by the venom gland.</text>
</comment>
<comment type="PTM">
    <text>The N-terminus of Jararhagin is blocked.</text>
</comment>
<comment type="miscellaneous">
    <text>The metalloproteinase domain which is released from the cleavage of jararhagin-C is apparently unstable.</text>
</comment>
<comment type="miscellaneous">
    <text>A third form of jararhagin is obtained when the toxin is submitted to in vitro autolysis. The disintegrin-like/cysteine-rich domains appear to be disulfid-linked to a N-terminal portion of the metalloproteinase domain.</text>
</comment>
<comment type="similarity">
    <text evidence="11">Belongs to the venom metalloproteinase (M12B) family. P-III subfamily. P-IIIb sub-subfamily.</text>
</comment>
<evidence type="ECO:0000250" key="1"/>
<evidence type="ECO:0000250" key="2">
    <source>
        <dbReference type="UniProtKB" id="O93523"/>
    </source>
</evidence>
<evidence type="ECO:0000255" key="3"/>
<evidence type="ECO:0000255" key="4">
    <source>
        <dbReference type="PROSITE-ProRule" id="PRU00068"/>
    </source>
</evidence>
<evidence type="ECO:0000255" key="5">
    <source>
        <dbReference type="PROSITE-ProRule" id="PRU00276"/>
    </source>
</evidence>
<evidence type="ECO:0000255" key="6">
    <source>
        <dbReference type="PROSITE-ProRule" id="PRU10095"/>
    </source>
</evidence>
<evidence type="ECO:0000269" key="7">
    <source>
    </source>
</evidence>
<evidence type="ECO:0000269" key="8">
    <source>
    </source>
</evidence>
<evidence type="ECO:0000269" key="9">
    <source>
    </source>
</evidence>
<evidence type="ECO:0000269" key="10">
    <source>
    </source>
</evidence>
<evidence type="ECO:0000305" key="11"/>
<protein>
    <recommendedName>
        <fullName>Zinc metalloproteinase-disintegrin-like jararhagin</fullName>
        <ecNumber>3.4.24.73</ecNumber>
    </recommendedName>
    <alternativeName>
        <fullName>HF2-proteinase</fullName>
    </alternativeName>
    <alternativeName>
        <fullName>JG</fullName>
    </alternativeName>
    <alternativeName>
        <fullName>Jararafibrase I</fullName>
        <shortName>JF I</shortName>
    </alternativeName>
    <alternativeName>
        <fullName>Snake venom metalloproteinase</fullName>
        <shortName>SVMP</shortName>
    </alternativeName>
    <component>
        <recommendedName>
            <fullName>Disintegrin-like jararhagin-C</fullName>
        </recommendedName>
        <alternativeName>
            <fullName>Jaracetin</fullName>
        </alternativeName>
    </component>
</protein>
<keyword id="KW-0053">Apoptosis</keyword>
<keyword id="KW-0106">Calcium</keyword>
<keyword id="KW-1217">Cell adhesion impairing toxin</keyword>
<keyword id="KW-0903">Direct protein sequencing</keyword>
<keyword id="KW-1015">Disulfide bond</keyword>
<keyword id="KW-1206">Fibrinogenolytic toxin</keyword>
<keyword id="KW-0325">Glycoprotein</keyword>
<keyword id="KW-1200">Hemorrhagic toxin</keyword>
<keyword id="KW-1199">Hemostasis impairing toxin</keyword>
<keyword id="KW-0378">Hydrolase</keyword>
<keyword id="KW-0479">Metal-binding</keyword>
<keyword id="KW-0482">Metalloprotease</keyword>
<keyword id="KW-1202">Platelet aggregation activating toxin</keyword>
<keyword id="KW-1201">Platelet aggregation inhibiting toxin</keyword>
<keyword id="KW-0645">Protease</keyword>
<keyword id="KW-0873">Pyrrolidone carboxylic acid</keyword>
<keyword id="KW-0964">Secreted</keyword>
<keyword id="KW-0800">Toxin</keyword>
<keyword id="KW-0862">Zinc</keyword>
<keyword id="KW-0865">Zymogen</keyword>
<organism>
    <name type="scientific">Bothrops jararaca</name>
    <name type="common">Jararaca</name>
    <name type="synonym">Bothrops jajaraca</name>
    <dbReference type="NCBI Taxonomy" id="8724"/>
    <lineage>
        <taxon>Eukaryota</taxon>
        <taxon>Metazoa</taxon>
        <taxon>Chordata</taxon>
        <taxon>Craniata</taxon>
        <taxon>Vertebrata</taxon>
        <taxon>Euteleostomi</taxon>
        <taxon>Lepidosauria</taxon>
        <taxon>Squamata</taxon>
        <taxon>Bifurcata</taxon>
        <taxon>Unidentata</taxon>
        <taxon>Episquamata</taxon>
        <taxon>Toxicofera</taxon>
        <taxon>Serpentes</taxon>
        <taxon>Colubroidea</taxon>
        <taxon>Viperidae</taxon>
        <taxon>Crotalinae</taxon>
        <taxon>Bothrops</taxon>
    </lineage>
</organism>
<sequence length="571" mass="63983">ATRPKGAVQPKYEDAMQYEFKVNGEPVVLHLEKNKGLFSKDYSEIHYSPDGREITTYPPVEDHCYYHGRIENDADSTASISACNGLKGYFKLQRETYFIEPLKLPDSEAHAVFKYENVEKEDEAPKMCGVTQNWKSYEPIKKASQLAFTAEQQRYDPYKYIEFFVVVDQGTVTKNNGDLDKIKARMYELANIVNEIFRYLYMHVALVGLEIWSNGDKITVKPDVDYTLNSFAEWRKTDLLTRKKHDNAQLLTAIDFNGPTIGYAYIGSMCHPKRSVGIVQDYSPINLVVAVIMAHEMGHNLGIHHDTGSCSCGDYPCIMGPTISNEPSKFFSNCSYIQCWDFIMNHNPECIINEPLGTDIISPPVCGNELLEVGEECDCGTPENCQNECCDAATCKLKSGSQCGHGDCCEQCKFSKSGTECRASMSECDPAEHCTGQSSECPADVFHKNGQPCLDNYGYCYNGNCPIMYHQCYALFGADVYEAEDSCFKDNQKGNYYGYCRKENGKKIPCAPEDVKCGRLYCKDNSPGQNNPCKMFYSNDDEHKGMVLPGTKCADGKVCSNGHCVDVATAY</sequence>
<accession>P30431</accession>
<dbReference type="EC" id="3.4.24.73"/>
<dbReference type="EMBL" id="X68251">
    <property type="protein sequence ID" value="CAA48323.1"/>
    <property type="molecule type" value="Genomic_DNA"/>
</dbReference>
<dbReference type="PIR" id="S24789">
    <property type="entry name" value="S24789"/>
</dbReference>
<dbReference type="SMR" id="P30431"/>
<dbReference type="MEROPS" id="M12.138"/>
<dbReference type="KEGG" id="ag:CAA48323"/>
<dbReference type="BRENDA" id="3.4.24.73">
    <property type="organism ID" value="911"/>
</dbReference>
<dbReference type="GO" id="GO:0005576">
    <property type="term" value="C:extracellular region"/>
    <property type="evidence" value="ECO:0007669"/>
    <property type="project" value="UniProtKB-SubCell"/>
</dbReference>
<dbReference type="GO" id="GO:0005886">
    <property type="term" value="C:plasma membrane"/>
    <property type="evidence" value="ECO:0007669"/>
    <property type="project" value="TreeGrafter"/>
</dbReference>
<dbReference type="GO" id="GO:0046872">
    <property type="term" value="F:metal ion binding"/>
    <property type="evidence" value="ECO:0007669"/>
    <property type="project" value="UniProtKB-KW"/>
</dbReference>
<dbReference type="GO" id="GO:0004222">
    <property type="term" value="F:metalloendopeptidase activity"/>
    <property type="evidence" value="ECO:0007669"/>
    <property type="project" value="InterPro"/>
</dbReference>
<dbReference type="GO" id="GO:0090729">
    <property type="term" value="F:toxin activity"/>
    <property type="evidence" value="ECO:0007669"/>
    <property type="project" value="UniProtKB-KW"/>
</dbReference>
<dbReference type="GO" id="GO:0006915">
    <property type="term" value="P:apoptotic process"/>
    <property type="evidence" value="ECO:0007669"/>
    <property type="project" value="UniProtKB-KW"/>
</dbReference>
<dbReference type="GO" id="GO:0006508">
    <property type="term" value="P:proteolysis"/>
    <property type="evidence" value="ECO:0007669"/>
    <property type="project" value="UniProtKB-KW"/>
</dbReference>
<dbReference type="CDD" id="cd04269">
    <property type="entry name" value="ZnMc_adamalysin_II_like"/>
    <property type="match status" value="1"/>
</dbReference>
<dbReference type="FunFam" id="3.40.390.10:FF:000002">
    <property type="entry name" value="Disintegrin and metalloproteinase domain-containing protein 22"/>
    <property type="match status" value="1"/>
</dbReference>
<dbReference type="FunFam" id="4.10.70.10:FF:000001">
    <property type="entry name" value="Disintegrin and metalloproteinase domain-containing protein 22"/>
    <property type="match status" value="1"/>
</dbReference>
<dbReference type="Gene3D" id="3.40.390.10">
    <property type="entry name" value="Collagenase (Catalytic Domain)"/>
    <property type="match status" value="1"/>
</dbReference>
<dbReference type="Gene3D" id="4.10.70.10">
    <property type="entry name" value="Disintegrin domain"/>
    <property type="match status" value="1"/>
</dbReference>
<dbReference type="InterPro" id="IPR006586">
    <property type="entry name" value="ADAM_Cys-rich"/>
</dbReference>
<dbReference type="InterPro" id="IPR018358">
    <property type="entry name" value="Disintegrin_CS"/>
</dbReference>
<dbReference type="InterPro" id="IPR001762">
    <property type="entry name" value="Disintegrin_dom"/>
</dbReference>
<dbReference type="InterPro" id="IPR036436">
    <property type="entry name" value="Disintegrin_dom_sf"/>
</dbReference>
<dbReference type="InterPro" id="IPR024079">
    <property type="entry name" value="MetalloPept_cat_dom_sf"/>
</dbReference>
<dbReference type="InterPro" id="IPR001590">
    <property type="entry name" value="Peptidase_M12B"/>
</dbReference>
<dbReference type="InterPro" id="IPR002870">
    <property type="entry name" value="Peptidase_M12B_N"/>
</dbReference>
<dbReference type="InterPro" id="IPR034027">
    <property type="entry name" value="Reprolysin_adamalysin"/>
</dbReference>
<dbReference type="PANTHER" id="PTHR11905">
    <property type="entry name" value="ADAM A DISINTEGRIN AND METALLOPROTEASE DOMAIN"/>
    <property type="match status" value="1"/>
</dbReference>
<dbReference type="PANTHER" id="PTHR11905:SF32">
    <property type="entry name" value="DISINTEGRIN AND METALLOPROTEINASE DOMAIN-CONTAINING PROTEIN 28"/>
    <property type="match status" value="1"/>
</dbReference>
<dbReference type="Pfam" id="PF08516">
    <property type="entry name" value="ADAM_CR"/>
    <property type="match status" value="1"/>
</dbReference>
<dbReference type="Pfam" id="PF00200">
    <property type="entry name" value="Disintegrin"/>
    <property type="match status" value="1"/>
</dbReference>
<dbReference type="Pfam" id="PF01562">
    <property type="entry name" value="Pep_M12B_propep"/>
    <property type="match status" value="1"/>
</dbReference>
<dbReference type="Pfam" id="PF01421">
    <property type="entry name" value="Reprolysin"/>
    <property type="match status" value="1"/>
</dbReference>
<dbReference type="PRINTS" id="PR00289">
    <property type="entry name" value="DISINTEGRIN"/>
</dbReference>
<dbReference type="SMART" id="SM00608">
    <property type="entry name" value="ACR"/>
    <property type="match status" value="1"/>
</dbReference>
<dbReference type="SMART" id="SM00050">
    <property type="entry name" value="DISIN"/>
    <property type="match status" value="1"/>
</dbReference>
<dbReference type="SUPFAM" id="SSF57552">
    <property type="entry name" value="Blood coagulation inhibitor (disintegrin)"/>
    <property type="match status" value="1"/>
</dbReference>
<dbReference type="SUPFAM" id="SSF55486">
    <property type="entry name" value="Metalloproteases ('zincins'), catalytic domain"/>
    <property type="match status" value="1"/>
</dbReference>
<dbReference type="PROSITE" id="PS50215">
    <property type="entry name" value="ADAM_MEPRO"/>
    <property type="match status" value="1"/>
</dbReference>
<dbReference type="PROSITE" id="PS00427">
    <property type="entry name" value="DISINTEGRIN_1"/>
    <property type="match status" value="1"/>
</dbReference>
<dbReference type="PROSITE" id="PS50214">
    <property type="entry name" value="DISINTEGRIN_2"/>
    <property type="match status" value="1"/>
</dbReference>
<dbReference type="PROSITE" id="PS00142">
    <property type="entry name" value="ZINC_PROTEASE"/>
    <property type="match status" value="1"/>
</dbReference>
<proteinExistence type="evidence at protein level"/>